<protein>
    <recommendedName>
        <fullName>Ras-related protein RSR1</fullName>
        <ecNumber evidence="2">3.6.5.2</ecNumber>
    </recommendedName>
</protein>
<evidence type="ECO:0000250" key="1"/>
<evidence type="ECO:0000250" key="2">
    <source>
        <dbReference type="UniProtKB" id="P13856"/>
    </source>
</evidence>
<evidence type="ECO:0000255" key="3"/>
<evidence type="ECO:0000256" key="4">
    <source>
        <dbReference type="SAM" id="MobiDB-lite"/>
    </source>
</evidence>
<evidence type="ECO:0000269" key="5">
    <source>
    </source>
</evidence>
<evidence type="ECO:0000305" key="6"/>
<feature type="chain" id="PRO_0000082690" description="Ras-related protein RSR1">
    <location>
        <begin position="1"/>
        <end position="245"/>
    </location>
</feature>
<feature type="propeptide" id="PRO_0000281341" description="Removed in mature form" evidence="1">
    <location>
        <begin position="246"/>
        <end position="248"/>
    </location>
</feature>
<feature type="region of interest" description="Disordered" evidence="4">
    <location>
        <begin position="182"/>
        <end position="248"/>
    </location>
</feature>
<feature type="short sequence motif" description="Effector region" evidence="3">
    <location>
        <begin position="32"/>
        <end position="40"/>
    </location>
</feature>
<feature type="compositionally biased region" description="Low complexity" evidence="4">
    <location>
        <begin position="184"/>
        <end position="214"/>
    </location>
</feature>
<feature type="compositionally biased region" description="Polar residues" evidence="4">
    <location>
        <begin position="219"/>
        <end position="231"/>
    </location>
</feature>
<feature type="compositionally biased region" description="Polar residues" evidence="4">
    <location>
        <begin position="238"/>
        <end position="248"/>
    </location>
</feature>
<feature type="binding site" evidence="1">
    <location>
        <begin position="10"/>
        <end position="17"/>
    </location>
    <ligand>
        <name>GTP</name>
        <dbReference type="ChEBI" id="CHEBI:37565"/>
    </ligand>
</feature>
<feature type="binding site" evidence="1">
    <location>
        <begin position="57"/>
        <end position="61"/>
    </location>
    <ligand>
        <name>GTP</name>
        <dbReference type="ChEBI" id="CHEBI:37565"/>
    </ligand>
</feature>
<feature type="binding site" evidence="1">
    <location>
        <begin position="116"/>
        <end position="119"/>
    </location>
    <ligand>
        <name>GTP</name>
        <dbReference type="ChEBI" id="CHEBI:37565"/>
    </ligand>
</feature>
<feature type="modified residue" description="Cysteine methyl ester" evidence="1">
    <location>
        <position position="245"/>
    </location>
</feature>
<feature type="lipid moiety-binding region" description="S-geranylgeranyl cysteine" evidence="1">
    <location>
        <position position="245"/>
    </location>
</feature>
<sequence length="248" mass="27658">MRDYKVVVLGAGGVGKSSITVQFVQGVYVESYDPTIEDSYRKQIEVDGRACDLEILDTAGVAQFTAMRELYIKSGKGFLLVYSVTDENSLKELLALREQVLRIKDSDNVPMVLVGNKCDLEDDRVLSIEDGVKVSQDWGLVPFYETSAMYKTNVDEAFIDVVRQIMRKEAAISAEKKQQKELQKQQQQQQQEQDAEGQQQQQKSGKSKSSATQKDATADGQTDVNARLKQSINDHPKSSSGSKFCTII</sequence>
<comment type="function">
    <text evidence="2 5">Ras-related protein which binds GDP/GTP and possesses intrinsic GTPase activity (By similarity). Involved in both yeast and hypha development. In the yeast phase, it is required for normal (polar) bud site selection and is involved in cell morphogenesis; in the yeast-mycelial transition it is involved in germ tube emergence; and in the development of the hyphae it is involved in cell elongation (PubMed:9308185).</text>
</comment>
<comment type="catalytic activity">
    <reaction evidence="2">
        <text>GTP + H2O = GDP + phosphate + H(+)</text>
        <dbReference type="Rhea" id="RHEA:19669"/>
        <dbReference type="ChEBI" id="CHEBI:15377"/>
        <dbReference type="ChEBI" id="CHEBI:15378"/>
        <dbReference type="ChEBI" id="CHEBI:37565"/>
        <dbReference type="ChEBI" id="CHEBI:43474"/>
        <dbReference type="ChEBI" id="CHEBI:58189"/>
        <dbReference type="EC" id="3.6.5.2"/>
    </reaction>
</comment>
<comment type="activity regulation">
    <text evidence="2">Alternates between an inactive form bound to GDP and an active form bound to GTP. Activated by a guanine nucleotide-exchange factor (GEF) and inactivated by a GTPase-activating protein (GAP).</text>
</comment>
<comment type="subcellular location">
    <subcellularLocation>
        <location evidence="6">Cell membrane</location>
        <topology evidence="6">Lipid-anchor</topology>
        <orientation evidence="6">Cytoplasmic side</orientation>
    </subcellularLocation>
</comment>
<comment type="similarity">
    <text evidence="6">Belongs to the small GTPase superfamily. Ras family.</text>
</comment>
<proteinExistence type="inferred from homology"/>
<name>RSR1_CANAX</name>
<reference key="1">
    <citation type="journal article" date="1997" name="Microbiology">
        <title>A Candida albicans RAS-related gene (CaRSR1) is involved in budding, cell morphogenesis and hypha development.</title>
        <authorList>
            <person name="Yaar L."/>
            <person name="Mevarech M."/>
            <person name="Koltin Y."/>
        </authorList>
    </citation>
    <scope>NUCLEOTIDE SEQUENCE [GENOMIC DNA]</scope>
    <scope>FUNCTION</scope>
    <source>
        <strain>ATCC 11651 / B792 / 171D</strain>
    </source>
</reference>
<dbReference type="EC" id="3.6.5.2" evidence="2"/>
<dbReference type="EMBL" id="U46158">
    <property type="protein sequence ID" value="AAB81286.1"/>
    <property type="molecule type" value="Genomic_DNA"/>
</dbReference>
<dbReference type="SMR" id="P52498"/>
<dbReference type="VEuPathDB" id="FungiDB:CAWG_01560"/>
<dbReference type="VEuPathDB" id="FungiDB:CR_02140W_A"/>
<dbReference type="PHI-base" id="PHI:62"/>
<dbReference type="GO" id="GO:0032153">
    <property type="term" value="C:cell division site"/>
    <property type="evidence" value="ECO:0007669"/>
    <property type="project" value="EnsemblFungi"/>
</dbReference>
<dbReference type="GO" id="GO:0005935">
    <property type="term" value="C:cellular bud neck"/>
    <property type="evidence" value="ECO:0007669"/>
    <property type="project" value="EnsemblFungi"/>
</dbReference>
<dbReference type="GO" id="GO:0000131">
    <property type="term" value="C:incipient cellular bud site"/>
    <property type="evidence" value="ECO:0007669"/>
    <property type="project" value="EnsemblFungi"/>
</dbReference>
<dbReference type="GO" id="GO:0005886">
    <property type="term" value="C:plasma membrane"/>
    <property type="evidence" value="ECO:0007669"/>
    <property type="project" value="UniProtKB-SubCell"/>
</dbReference>
<dbReference type="GO" id="GO:0005774">
    <property type="term" value="C:vacuolar membrane"/>
    <property type="evidence" value="ECO:0007669"/>
    <property type="project" value="EnsemblFungi"/>
</dbReference>
<dbReference type="GO" id="GO:0003925">
    <property type="term" value="F:G protein activity"/>
    <property type="evidence" value="ECO:0007669"/>
    <property type="project" value="UniProtKB-EC"/>
</dbReference>
<dbReference type="GO" id="GO:0005525">
    <property type="term" value="F:GTP binding"/>
    <property type="evidence" value="ECO:0007669"/>
    <property type="project" value="UniProtKB-KW"/>
</dbReference>
<dbReference type="GO" id="GO:0007120">
    <property type="term" value="P:axial cellular bud site selection"/>
    <property type="evidence" value="ECO:0007669"/>
    <property type="project" value="EnsemblFungi"/>
</dbReference>
<dbReference type="GO" id="GO:0007121">
    <property type="term" value="P:bipolar cellular bud site selection"/>
    <property type="evidence" value="ECO:0007669"/>
    <property type="project" value="EnsemblFungi"/>
</dbReference>
<dbReference type="GO" id="GO:0000755">
    <property type="term" value="P:cytogamy"/>
    <property type="evidence" value="ECO:0007669"/>
    <property type="project" value="EnsemblFungi"/>
</dbReference>
<dbReference type="GO" id="GO:0045184">
    <property type="term" value="P:establishment of protein localization"/>
    <property type="evidence" value="ECO:0007669"/>
    <property type="project" value="EnsemblFungi"/>
</dbReference>
<dbReference type="GO" id="GO:0032507">
    <property type="term" value="P:maintenance of protein location in cell"/>
    <property type="evidence" value="ECO:0007669"/>
    <property type="project" value="EnsemblFungi"/>
</dbReference>
<dbReference type="GO" id="GO:0035025">
    <property type="term" value="P:positive regulation of Rho protein signal transduction"/>
    <property type="evidence" value="ECO:0007669"/>
    <property type="project" value="EnsemblFungi"/>
</dbReference>
<dbReference type="GO" id="GO:2000114">
    <property type="term" value="P:regulation of establishment of cell polarity"/>
    <property type="evidence" value="ECO:0000315"/>
    <property type="project" value="CACAO"/>
</dbReference>
<dbReference type="GO" id="GO:0007264">
    <property type="term" value="P:small GTPase-mediated signal transduction"/>
    <property type="evidence" value="ECO:0007669"/>
    <property type="project" value="EnsemblFungi"/>
</dbReference>
<dbReference type="CDD" id="cd04177">
    <property type="entry name" value="RSR1"/>
    <property type="match status" value="1"/>
</dbReference>
<dbReference type="FunFam" id="3.40.50.300:FF:000631">
    <property type="entry name" value="Ras small monomeric GTPase"/>
    <property type="match status" value="1"/>
</dbReference>
<dbReference type="Gene3D" id="3.40.50.300">
    <property type="entry name" value="P-loop containing nucleotide triphosphate hydrolases"/>
    <property type="match status" value="1"/>
</dbReference>
<dbReference type="InterPro" id="IPR027417">
    <property type="entry name" value="P-loop_NTPase"/>
</dbReference>
<dbReference type="InterPro" id="IPR041841">
    <property type="entry name" value="Rsr1"/>
</dbReference>
<dbReference type="InterPro" id="IPR005225">
    <property type="entry name" value="Small_GTP-bd"/>
</dbReference>
<dbReference type="InterPro" id="IPR001806">
    <property type="entry name" value="Small_GTPase"/>
</dbReference>
<dbReference type="InterPro" id="IPR020849">
    <property type="entry name" value="Small_GTPase_Ras-type"/>
</dbReference>
<dbReference type="NCBIfam" id="TIGR00231">
    <property type="entry name" value="small_GTP"/>
    <property type="match status" value="1"/>
</dbReference>
<dbReference type="PANTHER" id="PTHR24070">
    <property type="entry name" value="RAS, DI-RAS, AND RHEB FAMILY MEMBERS OF SMALL GTPASE SUPERFAMILY"/>
    <property type="match status" value="1"/>
</dbReference>
<dbReference type="Pfam" id="PF00071">
    <property type="entry name" value="Ras"/>
    <property type="match status" value="1"/>
</dbReference>
<dbReference type="PRINTS" id="PR00449">
    <property type="entry name" value="RASTRNSFRMNG"/>
</dbReference>
<dbReference type="SMART" id="SM00175">
    <property type="entry name" value="RAB"/>
    <property type="match status" value="1"/>
</dbReference>
<dbReference type="SMART" id="SM00173">
    <property type="entry name" value="RAS"/>
    <property type="match status" value="1"/>
</dbReference>
<dbReference type="SMART" id="SM00174">
    <property type="entry name" value="RHO"/>
    <property type="match status" value="1"/>
</dbReference>
<dbReference type="SUPFAM" id="SSF52540">
    <property type="entry name" value="P-loop containing nucleoside triphosphate hydrolases"/>
    <property type="match status" value="1"/>
</dbReference>
<dbReference type="PROSITE" id="PS51421">
    <property type="entry name" value="RAS"/>
    <property type="match status" value="1"/>
</dbReference>
<gene>
    <name type="primary">RSR1</name>
</gene>
<accession>P52498</accession>
<keyword id="KW-1003">Cell membrane</keyword>
<keyword id="KW-0342">GTP-binding</keyword>
<keyword id="KW-0378">Hydrolase</keyword>
<keyword id="KW-0449">Lipoprotein</keyword>
<keyword id="KW-0472">Membrane</keyword>
<keyword id="KW-0488">Methylation</keyword>
<keyword id="KW-0547">Nucleotide-binding</keyword>
<keyword id="KW-0636">Prenylation</keyword>
<organism>
    <name type="scientific">Candida albicans</name>
    <name type="common">Yeast</name>
    <dbReference type="NCBI Taxonomy" id="5476"/>
    <lineage>
        <taxon>Eukaryota</taxon>
        <taxon>Fungi</taxon>
        <taxon>Dikarya</taxon>
        <taxon>Ascomycota</taxon>
        <taxon>Saccharomycotina</taxon>
        <taxon>Pichiomycetes</taxon>
        <taxon>Debaryomycetaceae</taxon>
        <taxon>Candida/Lodderomyces clade</taxon>
        <taxon>Candida</taxon>
    </lineage>
</organism>